<evidence type="ECO:0000255" key="1">
    <source>
        <dbReference type="HAMAP-Rule" id="MF_01307"/>
    </source>
</evidence>
<evidence type="ECO:0000305" key="2"/>
<dbReference type="EMBL" id="AF115283">
    <property type="protein sequence ID" value="AAD40600.1"/>
    <property type="status" value="ALT_INIT"/>
    <property type="molecule type" value="Genomic_DNA"/>
</dbReference>
<dbReference type="EMBL" id="AE010300">
    <property type="protein sequence ID" value="AAN47955.2"/>
    <property type="molecule type" value="Genomic_DNA"/>
</dbReference>
<dbReference type="RefSeq" id="NP_710937.2">
    <property type="nucleotide sequence ID" value="NC_004342.2"/>
</dbReference>
<dbReference type="RefSeq" id="WP_000331210.1">
    <property type="nucleotide sequence ID" value="NC_004342.2"/>
</dbReference>
<dbReference type="SMR" id="Q9XD19"/>
<dbReference type="FunCoup" id="Q9XD19">
    <property type="interactions" value="579"/>
</dbReference>
<dbReference type="STRING" id="189518.LA_0756"/>
<dbReference type="PaxDb" id="189518-LA_0756"/>
<dbReference type="EnsemblBacteria" id="AAN47955">
    <property type="protein sequence ID" value="AAN47955"/>
    <property type="gene ID" value="LA_0756"/>
</dbReference>
<dbReference type="GeneID" id="61142730"/>
<dbReference type="KEGG" id="lil:LA_0756"/>
<dbReference type="PATRIC" id="fig|189518.3.peg.762"/>
<dbReference type="HOGENOM" id="CLU_065898_2_2_12"/>
<dbReference type="InParanoid" id="Q9XD19"/>
<dbReference type="OrthoDB" id="9809045at2"/>
<dbReference type="PRO" id="PR:Q9XD19"/>
<dbReference type="Proteomes" id="UP000001408">
    <property type="component" value="Chromosome I"/>
</dbReference>
<dbReference type="GO" id="GO:0022627">
    <property type="term" value="C:cytosolic small ribosomal subunit"/>
    <property type="evidence" value="ECO:0000318"/>
    <property type="project" value="GO_Central"/>
</dbReference>
<dbReference type="GO" id="GO:0019843">
    <property type="term" value="F:rRNA binding"/>
    <property type="evidence" value="ECO:0007669"/>
    <property type="project" value="UniProtKB-UniRule"/>
</dbReference>
<dbReference type="GO" id="GO:0003735">
    <property type="term" value="F:structural constituent of ribosome"/>
    <property type="evidence" value="ECO:0000318"/>
    <property type="project" value="GO_Central"/>
</dbReference>
<dbReference type="GO" id="GO:0006412">
    <property type="term" value="P:translation"/>
    <property type="evidence" value="ECO:0000318"/>
    <property type="project" value="GO_Central"/>
</dbReference>
<dbReference type="FunFam" id="3.30.160.20:FF:000001">
    <property type="entry name" value="30S ribosomal protein S5"/>
    <property type="match status" value="1"/>
</dbReference>
<dbReference type="FunFam" id="3.30.230.10:FF:000002">
    <property type="entry name" value="30S ribosomal protein S5"/>
    <property type="match status" value="1"/>
</dbReference>
<dbReference type="Gene3D" id="3.30.160.20">
    <property type="match status" value="1"/>
</dbReference>
<dbReference type="Gene3D" id="3.30.230.10">
    <property type="match status" value="1"/>
</dbReference>
<dbReference type="HAMAP" id="MF_01307_B">
    <property type="entry name" value="Ribosomal_uS5_B"/>
    <property type="match status" value="1"/>
</dbReference>
<dbReference type="InterPro" id="IPR020568">
    <property type="entry name" value="Ribosomal_Su5_D2-typ_SF"/>
</dbReference>
<dbReference type="InterPro" id="IPR000851">
    <property type="entry name" value="Ribosomal_uS5"/>
</dbReference>
<dbReference type="InterPro" id="IPR005712">
    <property type="entry name" value="Ribosomal_uS5_bac-type"/>
</dbReference>
<dbReference type="InterPro" id="IPR005324">
    <property type="entry name" value="Ribosomal_uS5_C"/>
</dbReference>
<dbReference type="InterPro" id="IPR013810">
    <property type="entry name" value="Ribosomal_uS5_N"/>
</dbReference>
<dbReference type="InterPro" id="IPR018192">
    <property type="entry name" value="Ribosomal_uS5_N_CS"/>
</dbReference>
<dbReference type="InterPro" id="IPR014721">
    <property type="entry name" value="Ribsml_uS5_D2-typ_fold_subgr"/>
</dbReference>
<dbReference type="NCBIfam" id="TIGR01021">
    <property type="entry name" value="rpsE_bact"/>
    <property type="match status" value="1"/>
</dbReference>
<dbReference type="PANTHER" id="PTHR48277">
    <property type="entry name" value="MITOCHONDRIAL RIBOSOMAL PROTEIN S5"/>
    <property type="match status" value="1"/>
</dbReference>
<dbReference type="PANTHER" id="PTHR48277:SF1">
    <property type="entry name" value="MITOCHONDRIAL RIBOSOMAL PROTEIN S5"/>
    <property type="match status" value="1"/>
</dbReference>
<dbReference type="Pfam" id="PF00333">
    <property type="entry name" value="Ribosomal_S5"/>
    <property type="match status" value="1"/>
</dbReference>
<dbReference type="Pfam" id="PF03719">
    <property type="entry name" value="Ribosomal_S5_C"/>
    <property type="match status" value="1"/>
</dbReference>
<dbReference type="SUPFAM" id="SSF54768">
    <property type="entry name" value="dsRNA-binding domain-like"/>
    <property type="match status" value="1"/>
</dbReference>
<dbReference type="SUPFAM" id="SSF54211">
    <property type="entry name" value="Ribosomal protein S5 domain 2-like"/>
    <property type="match status" value="1"/>
</dbReference>
<dbReference type="PROSITE" id="PS00585">
    <property type="entry name" value="RIBOSOMAL_S5"/>
    <property type="match status" value="1"/>
</dbReference>
<dbReference type="PROSITE" id="PS50881">
    <property type="entry name" value="S5_DSRBD"/>
    <property type="match status" value="1"/>
</dbReference>
<name>RS5_LEPIN</name>
<comment type="function">
    <text evidence="1">With S4 and S12 plays an important role in translational accuracy.</text>
</comment>
<comment type="function">
    <text evidence="1">Located at the back of the 30S subunit body where it stabilizes the conformation of the head with respect to the body.</text>
</comment>
<comment type="subunit">
    <text evidence="1">Part of the 30S ribosomal subunit. Contacts proteins S4 and S8.</text>
</comment>
<comment type="domain">
    <text>The N-terminal domain interacts with the head of the 30S subunit; the C-terminal domain interacts with the body and contacts protein S4. The interaction surface between S4 and S5 is involved in control of translational fidelity.</text>
</comment>
<comment type="similarity">
    <text evidence="1">Belongs to the universal ribosomal protein uS5 family.</text>
</comment>
<comment type="sequence caution" evidence="2">
    <conflict type="erroneous initiation">
        <sequence resource="EMBL-CDS" id="AAD40600"/>
    </conflict>
    <text>Extended N-terminus.</text>
</comment>
<proteinExistence type="inferred from homology"/>
<accession>Q9XD19</accession>
<organism>
    <name type="scientific">Leptospira interrogans serogroup Icterohaemorrhagiae serovar Lai (strain 56601)</name>
    <dbReference type="NCBI Taxonomy" id="189518"/>
    <lineage>
        <taxon>Bacteria</taxon>
        <taxon>Pseudomonadati</taxon>
        <taxon>Spirochaetota</taxon>
        <taxon>Spirochaetia</taxon>
        <taxon>Leptospirales</taxon>
        <taxon>Leptospiraceae</taxon>
        <taxon>Leptospira</taxon>
    </lineage>
</organism>
<gene>
    <name evidence="1" type="primary">rpsE</name>
    <name type="ordered locus">LA_0756</name>
</gene>
<protein>
    <recommendedName>
        <fullName evidence="1">Small ribosomal subunit protein uS5</fullName>
    </recommendedName>
    <alternativeName>
        <fullName evidence="2">30S ribosomal protein S5</fullName>
    </alternativeName>
</protein>
<keyword id="KW-1185">Reference proteome</keyword>
<keyword id="KW-0687">Ribonucleoprotein</keyword>
<keyword id="KW-0689">Ribosomal protein</keyword>
<keyword id="KW-0694">RNA-binding</keyword>
<keyword id="KW-0699">rRNA-binding</keyword>
<sequence length="168" mass="18124">MAYQDEESKEYSEKVVKIDRVAKVVKGGRRFSFNALSVVGDQRGKVGIGFGKANEVPDAIRKSIESAKKHLVKINFKGHTIPHEVIGKFKSARVILKPSTAGTGIIAGASVRSIVEKAGIQDVLTKSWGSSNPVNIVKATLDALEQLETPILAAKKRGISLNKLFGKD</sequence>
<reference key="1">
    <citation type="journal article" date="2000" name="FEMS Microbiol. Lett.">
        <title>Characterization of the Leptospira interrogans S10-spc-alpha operon.</title>
        <authorList>
            <person name="Zuerner R.L."/>
            <person name="Hartskeerl R.A."/>
            <person name="van de Kemp H."/>
            <person name="Bal A.E."/>
        </authorList>
    </citation>
    <scope>NUCLEOTIDE SEQUENCE [GENOMIC DNA]</scope>
    <source>
        <strain>Lai / Serogroup Icterohaemorrhagiae / Serovar lai</strain>
    </source>
</reference>
<reference key="2">
    <citation type="journal article" date="2003" name="Nature">
        <title>Unique physiological and pathogenic features of Leptospira interrogans revealed by whole-genome sequencing.</title>
        <authorList>
            <person name="Ren S.-X."/>
            <person name="Fu G."/>
            <person name="Jiang X.-G."/>
            <person name="Zeng R."/>
            <person name="Miao Y.-G."/>
            <person name="Xu H."/>
            <person name="Zhang Y.-X."/>
            <person name="Xiong H."/>
            <person name="Lu G."/>
            <person name="Lu L.-F."/>
            <person name="Jiang H.-Q."/>
            <person name="Jia J."/>
            <person name="Tu Y.-F."/>
            <person name="Jiang J.-X."/>
            <person name="Gu W.-Y."/>
            <person name="Zhang Y.-Q."/>
            <person name="Cai Z."/>
            <person name="Sheng H.-H."/>
            <person name="Yin H.-F."/>
            <person name="Zhang Y."/>
            <person name="Zhu G.-F."/>
            <person name="Wan M."/>
            <person name="Huang H.-L."/>
            <person name="Qian Z."/>
            <person name="Wang S.-Y."/>
            <person name="Ma W."/>
            <person name="Yao Z.-J."/>
            <person name="Shen Y."/>
            <person name="Qiang B.-Q."/>
            <person name="Xia Q.-C."/>
            <person name="Guo X.-K."/>
            <person name="Danchin A."/>
            <person name="Saint Girons I."/>
            <person name="Somerville R.L."/>
            <person name="Wen Y.-M."/>
            <person name="Shi M.-H."/>
            <person name="Chen Z."/>
            <person name="Xu J.-G."/>
            <person name="Zhao G.-P."/>
        </authorList>
    </citation>
    <scope>NUCLEOTIDE SEQUENCE [LARGE SCALE GENOMIC DNA]</scope>
    <source>
        <strain>56601</strain>
    </source>
</reference>
<feature type="chain" id="PRO_0000131537" description="Small ribosomal subunit protein uS5">
    <location>
        <begin position="1"/>
        <end position="168"/>
    </location>
</feature>
<feature type="domain" description="S5 DRBM" evidence="1">
    <location>
        <begin position="11"/>
        <end position="74"/>
    </location>
</feature>
<feature type="sequence conflict" description="In Ref. 1; AAD40600." evidence="2" ref="1">
    <original>R</original>
    <variation>T</variation>
    <location>
        <position position="112"/>
    </location>
</feature>
<feature type="sequence conflict" description="In Ref. 1; AAD40600." evidence="2" ref="1">
    <original>E</original>
    <variation>G</variation>
    <location>
        <position position="145"/>
    </location>
</feature>
<feature type="sequence conflict" description="In Ref. 1; AAD40600." evidence="2" ref="1">
    <original>RGISLNKLFGKD</original>
    <variation>GDQPE</variation>
    <location>
        <begin position="157"/>
        <end position="168"/>
    </location>
</feature>